<proteinExistence type="inferred from homology"/>
<protein>
    <recommendedName>
        <fullName evidence="1">Crossover junction endodeoxyribonuclease RuvC</fullName>
        <ecNumber evidence="1">3.1.21.10</ecNumber>
    </recommendedName>
    <alternativeName>
        <fullName evidence="1">Holliday junction nuclease RuvC</fullName>
    </alternativeName>
    <alternativeName>
        <fullName evidence="1">Holliday junction resolvase RuvC</fullName>
    </alternativeName>
</protein>
<accession>A1WZ63</accession>
<feature type="chain" id="PRO_1000002765" description="Crossover junction endodeoxyribonuclease RuvC">
    <location>
        <begin position="1"/>
        <end position="167"/>
    </location>
</feature>
<feature type="active site" evidence="1">
    <location>
        <position position="8"/>
    </location>
</feature>
<feature type="active site" evidence="1">
    <location>
        <position position="67"/>
    </location>
</feature>
<feature type="active site" evidence="1">
    <location>
        <position position="139"/>
    </location>
</feature>
<feature type="binding site" evidence="1">
    <location>
        <position position="8"/>
    </location>
    <ligand>
        <name>Mg(2+)</name>
        <dbReference type="ChEBI" id="CHEBI:18420"/>
        <label>1</label>
    </ligand>
</feature>
<feature type="binding site" evidence="1">
    <location>
        <position position="67"/>
    </location>
    <ligand>
        <name>Mg(2+)</name>
        <dbReference type="ChEBI" id="CHEBI:18420"/>
        <label>2</label>
    </ligand>
</feature>
<feature type="binding site" evidence="1">
    <location>
        <position position="139"/>
    </location>
    <ligand>
        <name>Mg(2+)</name>
        <dbReference type="ChEBI" id="CHEBI:18420"/>
        <label>1</label>
    </ligand>
</feature>
<comment type="function">
    <text evidence="1">The RuvA-RuvB-RuvC complex processes Holliday junction (HJ) DNA during genetic recombination and DNA repair. Endonuclease that resolves HJ intermediates. Cleaves cruciform DNA by making single-stranded nicks across the HJ at symmetrical positions within the homologous arms, yielding a 5'-phosphate and a 3'-hydroxyl group; requires a central core of homology in the junction. The consensus cleavage sequence is 5'-(A/T)TT(C/G)-3'. Cleavage occurs on the 3'-side of the TT dinucleotide at the point of strand exchange. HJ branch migration catalyzed by RuvA-RuvB allows RuvC to scan DNA until it finds its consensus sequence, where it cleaves and resolves the cruciform DNA.</text>
</comment>
<comment type="catalytic activity">
    <reaction evidence="1">
        <text>Endonucleolytic cleavage at a junction such as a reciprocal single-stranded crossover between two homologous DNA duplexes (Holliday junction).</text>
        <dbReference type="EC" id="3.1.21.10"/>
    </reaction>
</comment>
<comment type="cofactor">
    <cofactor evidence="1">
        <name>Mg(2+)</name>
        <dbReference type="ChEBI" id="CHEBI:18420"/>
    </cofactor>
    <text evidence="1">Binds 2 Mg(2+) ion per subunit.</text>
</comment>
<comment type="subunit">
    <text evidence="1">Homodimer which binds Holliday junction (HJ) DNA. The HJ becomes 2-fold symmetrical on binding to RuvC with unstacked arms; it has a different conformation from HJ DNA in complex with RuvA. In the full resolvosome a probable DNA-RuvA(4)-RuvB(12)-RuvC(2) complex forms which resolves the HJ.</text>
</comment>
<comment type="subcellular location">
    <subcellularLocation>
        <location evidence="1">Cytoplasm</location>
    </subcellularLocation>
</comment>
<comment type="similarity">
    <text evidence="1">Belongs to the RuvC family.</text>
</comment>
<gene>
    <name evidence="1" type="primary">ruvC</name>
    <name type="ordered locus">Hhal_2211</name>
</gene>
<name>RUVC_HALHL</name>
<evidence type="ECO:0000255" key="1">
    <source>
        <dbReference type="HAMAP-Rule" id="MF_00034"/>
    </source>
</evidence>
<keyword id="KW-0963">Cytoplasm</keyword>
<keyword id="KW-0227">DNA damage</keyword>
<keyword id="KW-0233">DNA recombination</keyword>
<keyword id="KW-0234">DNA repair</keyword>
<keyword id="KW-0238">DNA-binding</keyword>
<keyword id="KW-0255">Endonuclease</keyword>
<keyword id="KW-0378">Hydrolase</keyword>
<keyword id="KW-0460">Magnesium</keyword>
<keyword id="KW-0479">Metal-binding</keyword>
<keyword id="KW-0540">Nuclease</keyword>
<keyword id="KW-1185">Reference proteome</keyword>
<sequence length="167" mass="17670">MTRILGIDPGSRVTGYGIVDDGRPTRLVTEGTLRLPRQAGLAERLGRIFDGLAELIAEHRPQEVALEQVFVHRNADTALKLGHARGAALTACVQAGLPVAEYAPARIKQAIAGSGRADKTQVGYMVRALLRLRTSPAEDAADALAAALCHAHHRSAPLTAATTGARR</sequence>
<organism>
    <name type="scientific">Halorhodospira halophila (strain DSM 244 / SL1)</name>
    <name type="common">Ectothiorhodospira halophila (strain DSM 244 / SL1)</name>
    <dbReference type="NCBI Taxonomy" id="349124"/>
    <lineage>
        <taxon>Bacteria</taxon>
        <taxon>Pseudomonadati</taxon>
        <taxon>Pseudomonadota</taxon>
        <taxon>Gammaproteobacteria</taxon>
        <taxon>Chromatiales</taxon>
        <taxon>Ectothiorhodospiraceae</taxon>
        <taxon>Halorhodospira</taxon>
    </lineage>
</organism>
<reference key="1">
    <citation type="submission" date="2006-12" db="EMBL/GenBank/DDBJ databases">
        <title>Complete sequence of Halorhodospira halophila SL1.</title>
        <authorList>
            <consortium name="US DOE Joint Genome Institute"/>
            <person name="Copeland A."/>
            <person name="Lucas S."/>
            <person name="Lapidus A."/>
            <person name="Barry K."/>
            <person name="Detter J.C."/>
            <person name="Glavina del Rio T."/>
            <person name="Hammon N."/>
            <person name="Israni S."/>
            <person name="Dalin E."/>
            <person name="Tice H."/>
            <person name="Pitluck S."/>
            <person name="Saunders E."/>
            <person name="Brettin T."/>
            <person name="Bruce D."/>
            <person name="Han C."/>
            <person name="Tapia R."/>
            <person name="Schmutz J."/>
            <person name="Larimer F."/>
            <person name="Land M."/>
            <person name="Hauser L."/>
            <person name="Kyrpides N."/>
            <person name="Mikhailova N."/>
            <person name="Hoff W."/>
            <person name="Richardson P."/>
        </authorList>
    </citation>
    <scope>NUCLEOTIDE SEQUENCE [LARGE SCALE GENOMIC DNA]</scope>
    <source>
        <strain>DSM 244 / SL1</strain>
    </source>
</reference>
<dbReference type="EC" id="3.1.21.10" evidence="1"/>
<dbReference type="EMBL" id="CP000544">
    <property type="protein sequence ID" value="ABM62975.1"/>
    <property type="molecule type" value="Genomic_DNA"/>
</dbReference>
<dbReference type="RefSeq" id="WP_011814997.1">
    <property type="nucleotide sequence ID" value="NC_008789.1"/>
</dbReference>
<dbReference type="SMR" id="A1WZ63"/>
<dbReference type="STRING" id="349124.Hhal_2211"/>
<dbReference type="KEGG" id="hha:Hhal_2211"/>
<dbReference type="eggNOG" id="COG0817">
    <property type="taxonomic scope" value="Bacteria"/>
</dbReference>
<dbReference type="HOGENOM" id="CLU_091257_3_1_6"/>
<dbReference type="OrthoDB" id="9805499at2"/>
<dbReference type="Proteomes" id="UP000000647">
    <property type="component" value="Chromosome"/>
</dbReference>
<dbReference type="GO" id="GO:0005737">
    <property type="term" value="C:cytoplasm"/>
    <property type="evidence" value="ECO:0007669"/>
    <property type="project" value="UniProtKB-SubCell"/>
</dbReference>
<dbReference type="GO" id="GO:0048476">
    <property type="term" value="C:Holliday junction resolvase complex"/>
    <property type="evidence" value="ECO:0007669"/>
    <property type="project" value="UniProtKB-UniRule"/>
</dbReference>
<dbReference type="GO" id="GO:0008821">
    <property type="term" value="F:crossover junction DNA endonuclease activity"/>
    <property type="evidence" value="ECO:0007669"/>
    <property type="project" value="UniProtKB-UniRule"/>
</dbReference>
<dbReference type="GO" id="GO:0003677">
    <property type="term" value="F:DNA binding"/>
    <property type="evidence" value="ECO:0007669"/>
    <property type="project" value="UniProtKB-KW"/>
</dbReference>
<dbReference type="GO" id="GO:0000287">
    <property type="term" value="F:magnesium ion binding"/>
    <property type="evidence" value="ECO:0007669"/>
    <property type="project" value="UniProtKB-UniRule"/>
</dbReference>
<dbReference type="GO" id="GO:0006310">
    <property type="term" value="P:DNA recombination"/>
    <property type="evidence" value="ECO:0007669"/>
    <property type="project" value="UniProtKB-UniRule"/>
</dbReference>
<dbReference type="GO" id="GO:0006281">
    <property type="term" value="P:DNA repair"/>
    <property type="evidence" value="ECO:0007669"/>
    <property type="project" value="UniProtKB-UniRule"/>
</dbReference>
<dbReference type="CDD" id="cd16962">
    <property type="entry name" value="RuvC"/>
    <property type="match status" value="1"/>
</dbReference>
<dbReference type="FunFam" id="3.30.420.10:FF:000002">
    <property type="entry name" value="Crossover junction endodeoxyribonuclease RuvC"/>
    <property type="match status" value="1"/>
</dbReference>
<dbReference type="Gene3D" id="3.30.420.10">
    <property type="entry name" value="Ribonuclease H-like superfamily/Ribonuclease H"/>
    <property type="match status" value="1"/>
</dbReference>
<dbReference type="HAMAP" id="MF_00034">
    <property type="entry name" value="RuvC"/>
    <property type="match status" value="1"/>
</dbReference>
<dbReference type="InterPro" id="IPR012337">
    <property type="entry name" value="RNaseH-like_sf"/>
</dbReference>
<dbReference type="InterPro" id="IPR036397">
    <property type="entry name" value="RNaseH_sf"/>
</dbReference>
<dbReference type="InterPro" id="IPR020563">
    <property type="entry name" value="X-over_junc_endoDNase_Mg_BS"/>
</dbReference>
<dbReference type="InterPro" id="IPR002176">
    <property type="entry name" value="X-over_junc_endoDNase_RuvC"/>
</dbReference>
<dbReference type="NCBIfam" id="TIGR00228">
    <property type="entry name" value="ruvC"/>
    <property type="match status" value="1"/>
</dbReference>
<dbReference type="PANTHER" id="PTHR30194">
    <property type="entry name" value="CROSSOVER JUNCTION ENDODEOXYRIBONUCLEASE RUVC"/>
    <property type="match status" value="1"/>
</dbReference>
<dbReference type="PANTHER" id="PTHR30194:SF3">
    <property type="entry name" value="CROSSOVER JUNCTION ENDODEOXYRIBONUCLEASE RUVC"/>
    <property type="match status" value="1"/>
</dbReference>
<dbReference type="Pfam" id="PF02075">
    <property type="entry name" value="RuvC"/>
    <property type="match status" value="1"/>
</dbReference>
<dbReference type="PRINTS" id="PR00696">
    <property type="entry name" value="RSOLVASERUVC"/>
</dbReference>
<dbReference type="SUPFAM" id="SSF53098">
    <property type="entry name" value="Ribonuclease H-like"/>
    <property type="match status" value="1"/>
</dbReference>
<dbReference type="PROSITE" id="PS01321">
    <property type="entry name" value="RUVC"/>
    <property type="match status" value="1"/>
</dbReference>